<name>FLIE_SALPK</name>
<accession>B5BGA1</accession>
<sequence length="104" mass="11108">MAAIQGIEGVISQLQATAMAARGQDTHSQSTVSFAGQLHAALDRISDRQTAARVQAEKFTLGEPGIALNDVMADMQKASVSMQMGIQVRNKLVAAYQEVMSMQV</sequence>
<protein>
    <recommendedName>
        <fullName evidence="1">Flagellar hook-basal body complex protein FliE</fullName>
    </recommendedName>
</protein>
<reference key="1">
    <citation type="journal article" date="2009" name="BMC Genomics">
        <title>Pseudogene accumulation in the evolutionary histories of Salmonella enterica serovars Paratyphi A and Typhi.</title>
        <authorList>
            <person name="Holt K.E."/>
            <person name="Thomson N.R."/>
            <person name="Wain J."/>
            <person name="Langridge G.C."/>
            <person name="Hasan R."/>
            <person name="Bhutta Z.A."/>
            <person name="Quail M.A."/>
            <person name="Norbertczak H."/>
            <person name="Walker D."/>
            <person name="Simmonds M."/>
            <person name="White B."/>
            <person name="Bason N."/>
            <person name="Mungall K."/>
            <person name="Dougan G."/>
            <person name="Parkhill J."/>
        </authorList>
    </citation>
    <scope>NUCLEOTIDE SEQUENCE [LARGE SCALE GENOMIC DNA]</scope>
    <source>
        <strain>AKU_12601</strain>
    </source>
</reference>
<organism>
    <name type="scientific">Salmonella paratyphi A (strain AKU_12601)</name>
    <dbReference type="NCBI Taxonomy" id="554290"/>
    <lineage>
        <taxon>Bacteria</taxon>
        <taxon>Pseudomonadati</taxon>
        <taxon>Pseudomonadota</taxon>
        <taxon>Gammaproteobacteria</taxon>
        <taxon>Enterobacterales</taxon>
        <taxon>Enterobacteriaceae</taxon>
        <taxon>Salmonella</taxon>
    </lineage>
</organism>
<dbReference type="EMBL" id="FM200053">
    <property type="protein sequence ID" value="CAR58983.1"/>
    <property type="molecule type" value="Genomic_DNA"/>
</dbReference>
<dbReference type="RefSeq" id="WP_000719037.1">
    <property type="nucleotide sequence ID" value="NC_011147.1"/>
</dbReference>
<dbReference type="SMR" id="B5BGA1"/>
<dbReference type="KEGG" id="sek:SSPA0841"/>
<dbReference type="HOGENOM" id="CLU_147249_0_2_6"/>
<dbReference type="Proteomes" id="UP000001869">
    <property type="component" value="Chromosome"/>
</dbReference>
<dbReference type="GO" id="GO:0009425">
    <property type="term" value="C:bacterial-type flagellum basal body"/>
    <property type="evidence" value="ECO:0007669"/>
    <property type="project" value="UniProtKB-SubCell"/>
</dbReference>
<dbReference type="GO" id="GO:0003774">
    <property type="term" value="F:cytoskeletal motor activity"/>
    <property type="evidence" value="ECO:0007669"/>
    <property type="project" value="InterPro"/>
</dbReference>
<dbReference type="GO" id="GO:0005198">
    <property type="term" value="F:structural molecule activity"/>
    <property type="evidence" value="ECO:0007669"/>
    <property type="project" value="InterPro"/>
</dbReference>
<dbReference type="GO" id="GO:0071973">
    <property type="term" value="P:bacterial-type flagellum-dependent cell motility"/>
    <property type="evidence" value="ECO:0007669"/>
    <property type="project" value="InterPro"/>
</dbReference>
<dbReference type="HAMAP" id="MF_00724">
    <property type="entry name" value="FliE"/>
    <property type="match status" value="1"/>
</dbReference>
<dbReference type="InterPro" id="IPR001624">
    <property type="entry name" value="FliE"/>
</dbReference>
<dbReference type="NCBIfam" id="TIGR00205">
    <property type="entry name" value="fliE"/>
    <property type="match status" value="1"/>
</dbReference>
<dbReference type="PANTHER" id="PTHR34653">
    <property type="match status" value="1"/>
</dbReference>
<dbReference type="PANTHER" id="PTHR34653:SF1">
    <property type="entry name" value="FLAGELLAR HOOK-BASAL BODY COMPLEX PROTEIN FLIE"/>
    <property type="match status" value="1"/>
</dbReference>
<dbReference type="Pfam" id="PF02049">
    <property type="entry name" value="FliE"/>
    <property type="match status" value="1"/>
</dbReference>
<dbReference type="PRINTS" id="PR01006">
    <property type="entry name" value="FLGHOOKFLIE"/>
</dbReference>
<feature type="chain" id="PRO_1000132675" description="Flagellar hook-basal body complex protein FliE">
    <location>
        <begin position="1"/>
        <end position="104"/>
    </location>
</feature>
<gene>
    <name evidence="1" type="primary">fliE</name>
    <name type="ordered locus">SSPA0841</name>
</gene>
<keyword id="KW-0975">Bacterial flagellum</keyword>
<proteinExistence type="inferred from homology"/>
<comment type="subcellular location">
    <subcellularLocation>
        <location evidence="1">Bacterial flagellum basal body</location>
    </subcellularLocation>
</comment>
<comment type="similarity">
    <text evidence="1">Belongs to the FliE family.</text>
</comment>
<evidence type="ECO:0000255" key="1">
    <source>
        <dbReference type="HAMAP-Rule" id="MF_00724"/>
    </source>
</evidence>